<evidence type="ECO:0000250" key="1"/>
<evidence type="ECO:0000255" key="2"/>
<evidence type="ECO:0000305" key="3"/>
<name>HA19_MOUSE</name>
<keyword id="KW-1015">Disulfide bond</keyword>
<keyword id="KW-0325">Glycoprotein</keyword>
<keyword id="KW-0391">Immunity</keyword>
<keyword id="KW-0472">Membrane</keyword>
<keyword id="KW-0490">MHC I</keyword>
<keyword id="KW-1185">Reference proteome</keyword>
<keyword id="KW-0732">Signal</keyword>
<accession>P14431</accession>
<feature type="signal peptide">
    <location>
        <begin position="1"/>
        <end position="21"/>
    </location>
</feature>
<feature type="chain" id="PRO_0000018935" description="H-2 class I histocompatibility antigen, Q9 alpha chain">
    <location>
        <begin position="22"/>
        <end position="200" status="greater than"/>
    </location>
</feature>
<feature type="topological domain" description="Extracellular" evidence="2">
    <location>
        <begin position="22"/>
        <end position="200" status="greater than"/>
    </location>
</feature>
<feature type="region of interest" description="Alpha-1">
    <location>
        <begin position="22"/>
        <end position="111"/>
    </location>
</feature>
<feature type="region of interest" description="Alpha-2">
    <location>
        <begin position="112"/>
        <end position="200" status="greater than"/>
    </location>
</feature>
<feature type="glycosylation site" description="N-linked (GlcNAc...) asparagine" evidence="2">
    <location>
        <position position="107"/>
    </location>
</feature>
<feature type="disulfide bond" evidence="1">
    <location>
        <begin position="122"/>
        <end position="185"/>
    </location>
</feature>
<feature type="non-terminal residue">
    <location>
        <position position="200"/>
    </location>
</feature>
<protein>
    <recommendedName>
        <fullName>H-2 class I histocompatibility antigen, Q9 alpha chain</fullName>
    </recommendedName>
</protein>
<dbReference type="EMBL" id="X03443">
    <property type="protein sequence ID" value="CAA27172.1"/>
    <property type="status" value="ALT_INIT"/>
    <property type="molecule type" value="Genomic_DNA"/>
</dbReference>
<dbReference type="SMR" id="P14431"/>
<dbReference type="FunCoup" id="P14431">
    <property type="interactions" value="24"/>
</dbReference>
<dbReference type="GlyCosmos" id="P14431">
    <property type="glycosylation" value="1 site, No reported glycans"/>
</dbReference>
<dbReference type="GlyGen" id="P14431">
    <property type="glycosylation" value="1 site"/>
</dbReference>
<dbReference type="jPOST" id="P14431"/>
<dbReference type="AGR" id="MGI:95938"/>
<dbReference type="MGI" id="MGI:95938">
    <property type="gene designation" value="H2-Q9"/>
</dbReference>
<dbReference type="InParanoid" id="P14431"/>
<dbReference type="Proteomes" id="UP000000589">
    <property type="component" value="Unplaced"/>
</dbReference>
<dbReference type="RNAct" id="P14431">
    <property type="molecule type" value="protein"/>
</dbReference>
<dbReference type="GO" id="GO:0009986">
    <property type="term" value="C:cell surface"/>
    <property type="evidence" value="ECO:0000314"/>
    <property type="project" value="MGI"/>
</dbReference>
<dbReference type="GO" id="GO:0009897">
    <property type="term" value="C:external side of plasma membrane"/>
    <property type="evidence" value="ECO:0000314"/>
    <property type="project" value="MGI"/>
</dbReference>
<dbReference type="GO" id="GO:0098553">
    <property type="term" value="C:lumenal side of endoplasmic reticulum membrane"/>
    <property type="evidence" value="ECO:0000304"/>
    <property type="project" value="Reactome"/>
</dbReference>
<dbReference type="GO" id="GO:0042612">
    <property type="term" value="C:MHC class I protein complex"/>
    <property type="evidence" value="ECO:0007669"/>
    <property type="project" value="UniProtKB-KW"/>
</dbReference>
<dbReference type="GO" id="GO:0032398">
    <property type="term" value="C:MHC class Ib protein complex"/>
    <property type="evidence" value="ECO:0000314"/>
    <property type="project" value="MGI"/>
</dbReference>
<dbReference type="GO" id="GO:0030670">
    <property type="term" value="C:phagocytic vesicle membrane"/>
    <property type="evidence" value="ECO:0000304"/>
    <property type="project" value="Reactome"/>
</dbReference>
<dbReference type="GO" id="GO:0042605">
    <property type="term" value="F:peptide antigen binding"/>
    <property type="evidence" value="ECO:0000314"/>
    <property type="project" value="MGI"/>
</dbReference>
<dbReference type="GO" id="GO:0002476">
    <property type="term" value="P:antigen processing and presentation of endogenous peptide antigen via MHC class Ib"/>
    <property type="evidence" value="ECO:0000314"/>
    <property type="project" value="MGI"/>
</dbReference>
<dbReference type="GO" id="GO:0002474">
    <property type="term" value="P:antigen processing and presentation of peptide antigen via MHC class I"/>
    <property type="evidence" value="ECO:0007669"/>
    <property type="project" value="UniProtKB-KW"/>
</dbReference>
<dbReference type="GO" id="GO:0071346">
    <property type="term" value="P:cellular response to type II interferon"/>
    <property type="evidence" value="ECO:0000314"/>
    <property type="project" value="MGI"/>
</dbReference>
<dbReference type="GO" id="GO:0051607">
    <property type="term" value="P:defense response to virus"/>
    <property type="evidence" value="ECO:0000314"/>
    <property type="project" value="MGI"/>
</dbReference>
<dbReference type="GO" id="GO:0001916">
    <property type="term" value="P:positive regulation of T cell mediated cytotoxicity"/>
    <property type="evidence" value="ECO:0000314"/>
    <property type="project" value="MGI"/>
</dbReference>
<dbReference type="GO" id="GO:0032729">
    <property type="term" value="P:positive regulation of type II interferon production"/>
    <property type="evidence" value="ECO:0000314"/>
    <property type="project" value="MGI"/>
</dbReference>
<dbReference type="FunFam" id="3.30.500.10:FF:000001">
    <property type="entry name" value="H-2 class I histocompatibility antigen, alpha chain"/>
    <property type="match status" value="1"/>
</dbReference>
<dbReference type="Gene3D" id="3.30.500.10">
    <property type="entry name" value="MHC class I-like antigen recognition-like"/>
    <property type="match status" value="1"/>
</dbReference>
<dbReference type="InterPro" id="IPR050208">
    <property type="entry name" value="MHC_class-I_related"/>
</dbReference>
<dbReference type="InterPro" id="IPR011161">
    <property type="entry name" value="MHC_I-like_Ag-recog"/>
</dbReference>
<dbReference type="InterPro" id="IPR037055">
    <property type="entry name" value="MHC_I-like_Ag-recog_sf"/>
</dbReference>
<dbReference type="InterPro" id="IPR011162">
    <property type="entry name" value="MHC_I/II-like_Ag-recog"/>
</dbReference>
<dbReference type="InterPro" id="IPR001039">
    <property type="entry name" value="MHC_I_a_a1/a2"/>
</dbReference>
<dbReference type="PANTHER" id="PTHR16675:SF251">
    <property type="entry name" value="HLA CLASS I HISTOCOMPATIBILITY ANTIGEN, C ALPHA CHAIN"/>
    <property type="match status" value="1"/>
</dbReference>
<dbReference type="PANTHER" id="PTHR16675">
    <property type="entry name" value="MHC CLASS I-RELATED"/>
    <property type="match status" value="1"/>
</dbReference>
<dbReference type="Pfam" id="PF00129">
    <property type="entry name" value="MHC_I"/>
    <property type="match status" value="1"/>
</dbReference>
<dbReference type="PRINTS" id="PR01638">
    <property type="entry name" value="MHCCLASSI"/>
</dbReference>
<dbReference type="SUPFAM" id="SSF54452">
    <property type="entry name" value="MHC antigen-recognition domain"/>
    <property type="match status" value="1"/>
</dbReference>
<proteinExistence type="inferred from homology"/>
<sequence>MALTMLLLLVAAALTLIETRAGQHSLQYFHTAVSRPGLGEPWFISVGYVDDTQFVRFDSDAENPRMEPRARWMEQEGPEYWERETQIAKGHEQSFRGSLRTAQSYYNQSKGGSHTLQWMYGCDMGSDGRLLRGYLQFAYEGRDYIALNEDLKTWTAVDMAAQITRRKWEQAGIAEKDQAYLEGTCMQSLRRYLELGKETL</sequence>
<gene>
    <name type="primary">H2-Q9</name>
</gene>
<comment type="function">
    <text>Involved in the presentation of foreign antigens to the immune system.</text>
</comment>
<comment type="subunit">
    <text>Heterodimer of an alpha chain and a beta chain (beta-2-microglobulin).</text>
</comment>
<comment type="subcellular location">
    <subcellularLocation>
        <location>Membrane</location>
        <topology>Single-pass type I membrane protein</topology>
    </subcellularLocation>
</comment>
<comment type="similarity">
    <text evidence="3">Belongs to the MHC class I family.</text>
</comment>
<comment type="sequence caution" evidence="3">
    <conflict type="erroneous initiation">
        <sequence resource="EMBL-CDS" id="CAA27172"/>
    </conflict>
</comment>
<reference key="1">
    <citation type="journal article" date="1985" name="EMBO J.">
        <title>Duplicated gene pairs and alleles of class I genes in the Qa2 region of the murine major histocompatibility complex: a comparison.</title>
        <authorList>
            <person name="Devlin J.J."/>
            <person name="Weiss E.H."/>
            <person name="Paulson M."/>
            <person name="Flavell R.A."/>
        </authorList>
    </citation>
    <scope>NUCLEOTIDE SEQUENCE [GENOMIC DNA]</scope>
    <source>
        <strain>C57BL/10</strain>
    </source>
</reference>
<organism>
    <name type="scientific">Mus musculus</name>
    <name type="common">Mouse</name>
    <dbReference type="NCBI Taxonomy" id="10090"/>
    <lineage>
        <taxon>Eukaryota</taxon>
        <taxon>Metazoa</taxon>
        <taxon>Chordata</taxon>
        <taxon>Craniata</taxon>
        <taxon>Vertebrata</taxon>
        <taxon>Euteleostomi</taxon>
        <taxon>Mammalia</taxon>
        <taxon>Eutheria</taxon>
        <taxon>Euarchontoglires</taxon>
        <taxon>Glires</taxon>
        <taxon>Rodentia</taxon>
        <taxon>Myomorpha</taxon>
        <taxon>Muroidea</taxon>
        <taxon>Muridae</taxon>
        <taxon>Murinae</taxon>
        <taxon>Mus</taxon>
        <taxon>Mus</taxon>
    </lineage>
</organism>